<comment type="function">
    <text evidence="1">Catalyzes the 2'-O-methylation at nucleotide C2498 in 23S rRNA.</text>
</comment>
<comment type="catalytic activity">
    <reaction evidence="1">
        <text>cytidine(2498) in 23S rRNA + S-adenosyl-L-methionine = 2'-O-methylcytidine(2498) in 23S rRNA + S-adenosyl-L-homocysteine + H(+)</text>
        <dbReference type="Rhea" id="RHEA:42788"/>
        <dbReference type="Rhea" id="RHEA-COMP:10244"/>
        <dbReference type="Rhea" id="RHEA-COMP:10245"/>
        <dbReference type="ChEBI" id="CHEBI:15378"/>
        <dbReference type="ChEBI" id="CHEBI:57856"/>
        <dbReference type="ChEBI" id="CHEBI:59789"/>
        <dbReference type="ChEBI" id="CHEBI:74495"/>
        <dbReference type="ChEBI" id="CHEBI:82748"/>
        <dbReference type="EC" id="2.1.1.186"/>
    </reaction>
</comment>
<comment type="subunit">
    <text evidence="1">Monomer.</text>
</comment>
<comment type="subcellular location">
    <subcellularLocation>
        <location evidence="1">Cytoplasm</location>
    </subcellularLocation>
</comment>
<comment type="similarity">
    <text evidence="1">Belongs to the class I-like SAM-binding methyltransferase superfamily. RNA methyltransferase RlmE family. RlmM subfamily.</text>
</comment>
<feature type="chain" id="PRO_1000087736" description="Ribosomal RNA large subunit methyltransferase M">
    <location>
        <begin position="1"/>
        <end position="354"/>
    </location>
</feature>
<feature type="active site" description="Proton acceptor" evidence="1">
    <location>
        <position position="300"/>
    </location>
</feature>
<feature type="binding site" evidence="1">
    <location>
        <position position="183"/>
    </location>
    <ligand>
        <name>S-adenosyl-L-methionine</name>
        <dbReference type="ChEBI" id="CHEBI:59789"/>
    </ligand>
</feature>
<feature type="binding site" evidence="1">
    <location>
        <begin position="216"/>
        <end position="219"/>
    </location>
    <ligand>
        <name>S-adenosyl-L-methionine</name>
        <dbReference type="ChEBI" id="CHEBI:59789"/>
    </ligand>
</feature>
<feature type="binding site" evidence="1">
    <location>
        <position position="235"/>
    </location>
    <ligand>
        <name>S-adenosyl-L-methionine</name>
        <dbReference type="ChEBI" id="CHEBI:59789"/>
    </ligand>
</feature>
<feature type="binding site" evidence="1">
    <location>
        <position position="255"/>
    </location>
    <ligand>
        <name>S-adenosyl-L-methionine</name>
        <dbReference type="ChEBI" id="CHEBI:59789"/>
    </ligand>
</feature>
<feature type="binding site" evidence="1">
    <location>
        <position position="271"/>
    </location>
    <ligand>
        <name>S-adenosyl-L-methionine</name>
        <dbReference type="ChEBI" id="CHEBI:59789"/>
    </ligand>
</feature>
<reference key="1">
    <citation type="submission" date="2008-01" db="EMBL/GenBank/DDBJ databases">
        <title>Complete sequence of Pseudomonas putida GB-1.</title>
        <authorList>
            <consortium name="US DOE Joint Genome Institute"/>
            <person name="Copeland A."/>
            <person name="Lucas S."/>
            <person name="Lapidus A."/>
            <person name="Barry K."/>
            <person name="Glavina del Rio T."/>
            <person name="Dalin E."/>
            <person name="Tice H."/>
            <person name="Pitluck S."/>
            <person name="Bruce D."/>
            <person name="Goodwin L."/>
            <person name="Chertkov O."/>
            <person name="Brettin T."/>
            <person name="Detter J.C."/>
            <person name="Han C."/>
            <person name="Kuske C.R."/>
            <person name="Schmutz J."/>
            <person name="Larimer F."/>
            <person name="Land M."/>
            <person name="Hauser L."/>
            <person name="Kyrpides N."/>
            <person name="Kim E."/>
            <person name="McCarthy J.K."/>
            <person name="Richardson P."/>
        </authorList>
    </citation>
    <scope>NUCLEOTIDE SEQUENCE [LARGE SCALE GENOMIC DNA]</scope>
    <source>
        <strain>GB-1</strain>
    </source>
</reference>
<protein>
    <recommendedName>
        <fullName evidence="1">Ribosomal RNA large subunit methyltransferase M</fullName>
        <ecNumber evidence="1">2.1.1.186</ecNumber>
    </recommendedName>
    <alternativeName>
        <fullName evidence="1">23S rRNA (cytidine2498-2'-O)-methyltransferase</fullName>
    </alternativeName>
    <alternativeName>
        <fullName evidence="1">23S rRNA 2'-O-ribose methyltransferase RlmM</fullName>
    </alternativeName>
</protein>
<sequence length="354" mass="40160">MNTLFMHCRPGFEGEVCAEISEHAARLGVSGYAKSKPQSASAEFVCSEEGGAERLMGELRFNQLIFPRQWARGGFVELPETDRISVLLSQLADFPVFGSLWLEVLDSNEGKELSTFCRKFEVPLRKALEKAGRLVDDASRPRLLLSFISGRRVFVGVAPANNSALWPMGIPRLKFPREAPSRSTLKLEEAWHQFIPREQWEQRLGDDMTGVDLGASPGGWTYQLVRRGMLVTAIDNGPMAESLMDTGLVQHLMADGFTWQPKQPVDWMVCDIVEKPARTTSLIETWLGEGLCREAVVNLKLPMKQRYAEVRRLLDRMEATFKARKIRVSIACKQLYHDREEVTCHLRRLDLKPR</sequence>
<proteinExistence type="inferred from homology"/>
<dbReference type="EC" id="2.1.1.186" evidence="1"/>
<dbReference type="EMBL" id="CP000926">
    <property type="protein sequence ID" value="ABY97558.1"/>
    <property type="molecule type" value="Genomic_DNA"/>
</dbReference>
<dbReference type="RefSeq" id="WP_012271321.1">
    <property type="nucleotide sequence ID" value="NC_010322.1"/>
</dbReference>
<dbReference type="SMR" id="B0KGD7"/>
<dbReference type="KEGG" id="ppg:PputGB1_1655"/>
<dbReference type="eggNOG" id="COG2933">
    <property type="taxonomic scope" value="Bacteria"/>
</dbReference>
<dbReference type="HOGENOM" id="CLU_043780_0_0_6"/>
<dbReference type="Proteomes" id="UP000002157">
    <property type="component" value="Chromosome"/>
</dbReference>
<dbReference type="GO" id="GO:0005737">
    <property type="term" value="C:cytoplasm"/>
    <property type="evidence" value="ECO:0007669"/>
    <property type="project" value="UniProtKB-SubCell"/>
</dbReference>
<dbReference type="GO" id="GO:0008757">
    <property type="term" value="F:S-adenosylmethionine-dependent methyltransferase activity"/>
    <property type="evidence" value="ECO:0007669"/>
    <property type="project" value="UniProtKB-UniRule"/>
</dbReference>
<dbReference type="GO" id="GO:0032259">
    <property type="term" value="P:methylation"/>
    <property type="evidence" value="ECO:0007669"/>
    <property type="project" value="UniProtKB-KW"/>
</dbReference>
<dbReference type="GO" id="GO:0006364">
    <property type="term" value="P:rRNA processing"/>
    <property type="evidence" value="ECO:0007669"/>
    <property type="project" value="UniProtKB-UniRule"/>
</dbReference>
<dbReference type="Gene3D" id="3.30.2300.20">
    <property type="match status" value="1"/>
</dbReference>
<dbReference type="Gene3D" id="3.30.70.2810">
    <property type="match status" value="1"/>
</dbReference>
<dbReference type="Gene3D" id="3.40.50.150">
    <property type="entry name" value="Vaccinia Virus protein VP39"/>
    <property type="match status" value="1"/>
</dbReference>
<dbReference type="HAMAP" id="MF_01551">
    <property type="entry name" value="23SrRNA_methyltr_M"/>
    <property type="match status" value="1"/>
</dbReference>
<dbReference type="InterPro" id="IPR040739">
    <property type="entry name" value="RlmM_FDX"/>
</dbReference>
<dbReference type="InterPro" id="IPR048646">
    <property type="entry name" value="RlmM_THUMP-like"/>
</dbReference>
<dbReference type="InterPro" id="IPR002877">
    <property type="entry name" value="RNA_MeTrfase_FtsJ_dom"/>
</dbReference>
<dbReference type="InterPro" id="IPR011224">
    <property type="entry name" value="rRNA_MeTrfase_M"/>
</dbReference>
<dbReference type="InterPro" id="IPR029063">
    <property type="entry name" value="SAM-dependent_MTases_sf"/>
</dbReference>
<dbReference type="NCBIfam" id="NF008734">
    <property type="entry name" value="PRK11760.1"/>
    <property type="match status" value="1"/>
</dbReference>
<dbReference type="PANTHER" id="PTHR37524">
    <property type="entry name" value="RIBOSOMAL RNA LARGE SUBUNIT METHYLTRANSFERASE M"/>
    <property type="match status" value="1"/>
</dbReference>
<dbReference type="PANTHER" id="PTHR37524:SF2">
    <property type="entry name" value="RIBOSOMAL RNA METHYLTRANSFERASE FTSJ DOMAIN-CONTAINING PROTEIN"/>
    <property type="match status" value="1"/>
</dbReference>
<dbReference type="Pfam" id="PF01728">
    <property type="entry name" value="FtsJ"/>
    <property type="match status" value="1"/>
</dbReference>
<dbReference type="Pfam" id="PF18125">
    <property type="entry name" value="RlmM_FDX"/>
    <property type="match status" value="1"/>
</dbReference>
<dbReference type="Pfam" id="PF21239">
    <property type="entry name" value="RLMM_N"/>
    <property type="match status" value="1"/>
</dbReference>
<dbReference type="PIRSF" id="PIRSF028774">
    <property type="entry name" value="UCP028774"/>
    <property type="match status" value="1"/>
</dbReference>
<dbReference type="SUPFAM" id="SSF53335">
    <property type="entry name" value="S-adenosyl-L-methionine-dependent methyltransferases"/>
    <property type="match status" value="1"/>
</dbReference>
<evidence type="ECO:0000255" key="1">
    <source>
        <dbReference type="HAMAP-Rule" id="MF_01551"/>
    </source>
</evidence>
<organism>
    <name type="scientific">Pseudomonas putida (strain GB-1)</name>
    <dbReference type="NCBI Taxonomy" id="76869"/>
    <lineage>
        <taxon>Bacteria</taxon>
        <taxon>Pseudomonadati</taxon>
        <taxon>Pseudomonadota</taxon>
        <taxon>Gammaproteobacteria</taxon>
        <taxon>Pseudomonadales</taxon>
        <taxon>Pseudomonadaceae</taxon>
        <taxon>Pseudomonas</taxon>
    </lineage>
</organism>
<name>RLMM_PSEPG</name>
<keyword id="KW-0963">Cytoplasm</keyword>
<keyword id="KW-0489">Methyltransferase</keyword>
<keyword id="KW-0698">rRNA processing</keyword>
<keyword id="KW-0949">S-adenosyl-L-methionine</keyword>
<keyword id="KW-0808">Transferase</keyword>
<accession>B0KGD7</accession>
<gene>
    <name evidence="1" type="primary">rlmM</name>
    <name type="ordered locus">PputGB1_1655</name>
</gene>